<protein>
    <recommendedName>
        <fullName>Vacuolar membrane protein Kpol_1003p17</fullName>
    </recommendedName>
</protein>
<gene>
    <name type="ORF">Kpol_1003p17</name>
</gene>
<feature type="chain" id="PRO_0000409319" description="Vacuolar membrane protein Kpol_1003p17">
    <location>
        <begin position="1"/>
        <end position="343"/>
    </location>
</feature>
<feature type="transmembrane region" description="Helical" evidence="2">
    <location>
        <begin position="101"/>
        <end position="121"/>
    </location>
</feature>
<feature type="region of interest" description="Disordered" evidence="3">
    <location>
        <begin position="45"/>
        <end position="65"/>
    </location>
</feature>
<feature type="region of interest" description="Disordered" evidence="3">
    <location>
        <begin position="235"/>
        <end position="343"/>
    </location>
</feature>
<feature type="compositionally biased region" description="Polar residues" evidence="3">
    <location>
        <begin position="254"/>
        <end position="264"/>
    </location>
</feature>
<feature type="compositionally biased region" description="Basic and acidic residues" evidence="3">
    <location>
        <begin position="269"/>
        <end position="280"/>
    </location>
</feature>
<feature type="compositionally biased region" description="Basic residues" evidence="3">
    <location>
        <begin position="281"/>
        <end position="290"/>
    </location>
</feature>
<sequence length="343" mass="38046">MNGSLNIRGLPKLTTSTSISVSSTSASSTLSTTTLSSNSIISSITTDTSGTSTSSRDVSSGQSTLNSISTTSSIIVPSITPPSAAKNPNVWHSEDSDGTVFIAVGSIIGGIFGGVLIWWMITSYLSHVKTKKAYHSDMEEQYMSHLNGGSPHKVGSYHDDKSKIENPFSSFYMDDLESSNKKKYSRVSLVSDNPFDEDLDYALDTTEQVRYNPIQDETNHYANKKDTLFISPTKEVLQQQRQRRESKLFDNPSELPSTPPSNFKTLMLKPERSASPERKSRSPIRQHRKNNSSVQLTPLKLDSGEDDFKKTPTKKKNVNNSNNNNKHKKTPSMYLDDMLENDN</sequence>
<keyword id="KW-0472">Membrane</keyword>
<keyword id="KW-1185">Reference proteome</keyword>
<keyword id="KW-0812">Transmembrane</keyword>
<keyword id="KW-1133">Transmembrane helix</keyword>
<keyword id="KW-0926">Vacuole</keyword>
<evidence type="ECO:0000250" key="1"/>
<evidence type="ECO:0000255" key="2"/>
<evidence type="ECO:0000256" key="3">
    <source>
        <dbReference type="SAM" id="MobiDB-lite"/>
    </source>
</evidence>
<evidence type="ECO:0000305" key="4"/>
<proteinExistence type="inferred from homology"/>
<organism>
    <name type="scientific">Vanderwaltozyma polyspora (strain ATCC 22028 / DSM 70294 / BCRC 21397 / CBS 2163 / NBRC 10782 / NRRL Y-8283 / UCD 57-17)</name>
    <name type="common">Kluyveromyces polysporus</name>
    <dbReference type="NCBI Taxonomy" id="436907"/>
    <lineage>
        <taxon>Eukaryota</taxon>
        <taxon>Fungi</taxon>
        <taxon>Dikarya</taxon>
        <taxon>Ascomycota</taxon>
        <taxon>Saccharomycotina</taxon>
        <taxon>Saccharomycetes</taxon>
        <taxon>Saccharomycetales</taxon>
        <taxon>Saccharomycetaceae</taxon>
        <taxon>Vanderwaltozyma</taxon>
    </lineage>
</organism>
<dbReference type="EMBL" id="DS480418">
    <property type="protein sequence ID" value="EDO16712.1"/>
    <property type="molecule type" value="Genomic_DNA"/>
</dbReference>
<dbReference type="RefSeq" id="XP_001644570.1">
    <property type="nucleotide sequence ID" value="XM_001644520.1"/>
</dbReference>
<dbReference type="SMR" id="A7TLX5"/>
<dbReference type="FunCoup" id="A7TLX5">
    <property type="interactions" value="73"/>
</dbReference>
<dbReference type="GeneID" id="5544879"/>
<dbReference type="KEGG" id="vpo:Kpol_1003p17"/>
<dbReference type="eggNOG" id="ENOG502S625">
    <property type="taxonomic scope" value="Eukaryota"/>
</dbReference>
<dbReference type="HOGENOM" id="CLU_061224_0_0_1"/>
<dbReference type="InParanoid" id="A7TLX5"/>
<dbReference type="OMA" id="MEGYHKR"/>
<dbReference type="OrthoDB" id="4065319at2759"/>
<dbReference type="PhylomeDB" id="A7TLX5"/>
<dbReference type="Proteomes" id="UP000000267">
    <property type="component" value="Unassembled WGS sequence"/>
</dbReference>
<dbReference type="GO" id="GO:0005935">
    <property type="term" value="C:cellular bud neck"/>
    <property type="evidence" value="ECO:0007669"/>
    <property type="project" value="TreeGrafter"/>
</dbReference>
<dbReference type="GO" id="GO:0000324">
    <property type="term" value="C:fungal-type vacuole"/>
    <property type="evidence" value="ECO:0007669"/>
    <property type="project" value="TreeGrafter"/>
</dbReference>
<dbReference type="GO" id="GO:0005774">
    <property type="term" value="C:vacuolar membrane"/>
    <property type="evidence" value="ECO:0007669"/>
    <property type="project" value="UniProtKB-SubCell"/>
</dbReference>
<dbReference type="InterPro" id="IPR051009">
    <property type="entry name" value="PRM"/>
</dbReference>
<dbReference type="PANTHER" id="PTHR36089">
    <property type="entry name" value="CHITIN SYNTHASE 3 COMPLEX PROTEIN CSI2-RELATED"/>
    <property type="match status" value="1"/>
</dbReference>
<dbReference type="PANTHER" id="PTHR36089:SF1">
    <property type="entry name" value="CHITIN SYNTHASE 3 COMPLEX PROTEIN CSI2-RELATED"/>
    <property type="match status" value="1"/>
</dbReference>
<accession>A7TLX5</accession>
<reference key="1">
    <citation type="journal article" date="2007" name="Proc. Natl. Acad. Sci. U.S.A.">
        <title>Independent sorting-out of thousands of duplicated gene pairs in two yeast species descended from a whole-genome duplication.</title>
        <authorList>
            <person name="Scannell D.R."/>
            <person name="Frank A.C."/>
            <person name="Conant G.C."/>
            <person name="Byrne K.P."/>
            <person name="Woolfit M."/>
            <person name="Wolfe K.H."/>
        </authorList>
    </citation>
    <scope>NUCLEOTIDE SEQUENCE [LARGE SCALE GENOMIC DNA]</scope>
    <source>
        <strain>ATCC 22028 / DSM 70294 / BCRC 21397 / CBS 2163 / NBRC 10782 / NRRL Y-8283 / UCD 57-17</strain>
    </source>
</reference>
<comment type="subcellular location">
    <subcellularLocation>
        <location evidence="1">Vacuole membrane</location>
        <topology evidence="1">Single-pass membrane protein</topology>
    </subcellularLocation>
</comment>
<comment type="similarity">
    <text evidence="4">Belongs to the PRM5 family.</text>
</comment>
<name>YNF8_VANPO</name>